<keyword id="KW-0997">Cell inner membrane</keyword>
<keyword id="KW-1003">Cell membrane</keyword>
<keyword id="KW-0472">Membrane</keyword>
<keyword id="KW-0520">NAD</keyword>
<keyword id="KW-0874">Quinone</keyword>
<keyword id="KW-1278">Translocase</keyword>
<keyword id="KW-0812">Transmembrane</keyword>
<keyword id="KW-1133">Transmembrane helix</keyword>
<keyword id="KW-0813">Transport</keyword>
<keyword id="KW-0830">Ubiquinone</keyword>
<evidence type="ECO:0000255" key="1">
    <source>
        <dbReference type="HAMAP-Rule" id="MF_01394"/>
    </source>
</evidence>
<accession>Q2NSJ9</accession>
<sequence length="145" mass="16245">MSITTEITAHYWAFAVFLLSALGLCVFMLTGGFLLGARARARSKNVPFESGIDPVGTARLRLSAKFYLVAMFFVIFDVETLYLYAWATAIREAGWVGFIEATIFILILLAGLVYLVRIGALDWTPERSRRLRRAGPIGETPRHQE</sequence>
<comment type="function">
    <text evidence="1">NDH-1 shuttles electrons from NADH, via FMN and iron-sulfur (Fe-S) centers, to quinones in the respiratory chain. The immediate electron acceptor for the enzyme in this species is believed to be ubiquinone. Couples the redox reaction to proton translocation (for every two electrons transferred, four hydrogen ions are translocated across the cytoplasmic membrane), and thus conserves the redox energy in a proton gradient.</text>
</comment>
<comment type="catalytic activity">
    <reaction evidence="1">
        <text>a quinone + NADH + 5 H(+)(in) = a quinol + NAD(+) + 4 H(+)(out)</text>
        <dbReference type="Rhea" id="RHEA:57888"/>
        <dbReference type="ChEBI" id="CHEBI:15378"/>
        <dbReference type="ChEBI" id="CHEBI:24646"/>
        <dbReference type="ChEBI" id="CHEBI:57540"/>
        <dbReference type="ChEBI" id="CHEBI:57945"/>
        <dbReference type="ChEBI" id="CHEBI:132124"/>
    </reaction>
</comment>
<comment type="subunit">
    <text evidence="1">NDH-1 is composed of 13 different subunits. Subunits NuoA, H, J, K, L, M, N constitute the membrane sector of the complex.</text>
</comment>
<comment type="subcellular location">
    <subcellularLocation>
        <location evidence="1">Cell inner membrane</location>
        <topology evidence="1">Multi-pass membrane protein</topology>
    </subcellularLocation>
</comment>
<comment type="similarity">
    <text evidence="1">Belongs to the complex I subunit 3 family.</text>
</comment>
<organism>
    <name type="scientific">Sodalis glossinidius (strain morsitans)</name>
    <dbReference type="NCBI Taxonomy" id="343509"/>
    <lineage>
        <taxon>Bacteria</taxon>
        <taxon>Pseudomonadati</taxon>
        <taxon>Pseudomonadota</taxon>
        <taxon>Gammaproteobacteria</taxon>
        <taxon>Enterobacterales</taxon>
        <taxon>Bruguierivoracaceae</taxon>
        <taxon>Sodalis</taxon>
    </lineage>
</organism>
<reference key="1">
    <citation type="journal article" date="2006" name="Genome Res.">
        <title>Massive genome erosion and functional adaptations provide insights into the symbiotic lifestyle of Sodalis glossinidius in the tsetse host.</title>
        <authorList>
            <person name="Toh H."/>
            <person name="Weiss B.L."/>
            <person name="Perkin S.A.H."/>
            <person name="Yamashita A."/>
            <person name="Oshima K."/>
            <person name="Hattori M."/>
            <person name="Aksoy S."/>
        </authorList>
    </citation>
    <scope>NUCLEOTIDE SEQUENCE [LARGE SCALE GENOMIC DNA]</scope>
    <source>
        <strain>morsitans</strain>
    </source>
</reference>
<proteinExistence type="inferred from homology"/>
<gene>
    <name evidence="1" type="primary">nuoA</name>
    <name type="ordered locus">SG1601</name>
</gene>
<protein>
    <recommendedName>
        <fullName evidence="1">NADH-quinone oxidoreductase subunit A</fullName>
        <ecNumber evidence="1">7.1.1.-</ecNumber>
    </recommendedName>
    <alternativeName>
        <fullName evidence="1">NADH dehydrogenase I subunit A</fullName>
    </alternativeName>
    <alternativeName>
        <fullName evidence="1">NDH-1 subunit A</fullName>
    </alternativeName>
    <alternativeName>
        <fullName evidence="1">NUO1</fullName>
    </alternativeName>
</protein>
<dbReference type="EC" id="7.1.1.-" evidence="1"/>
<dbReference type="EMBL" id="AP008232">
    <property type="protein sequence ID" value="BAE74876.1"/>
    <property type="molecule type" value="Genomic_DNA"/>
</dbReference>
<dbReference type="RefSeq" id="WP_011411429.1">
    <property type="nucleotide sequence ID" value="NC_007712.1"/>
</dbReference>
<dbReference type="SMR" id="Q2NSJ9"/>
<dbReference type="STRING" id="343509.SG1601"/>
<dbReference type="KEGG" id="sgl:SG1601"/>
<dbReference type="eggNOG" id="COG0838">
    <property type="taxonomic scope" value="Bacteria"/>
</dbReference>
<dbReference type="HOGENOM" id="CLU_119549_2_1_6"/>
<dbReference type="OrthoDB" id="9791970at2"/>
<dbReference type="BioCyc" id="SGLO343509:SGP1_RS14545-MONOMER"/>
<dbReference type="Proteomes" id="UP000001932">
    <property type="component" value="Chromosome"/>
</dbReference>
<dbReference type="GO" id="GO:0030964">
    <property type="term" value="C:NADH dehydrogenase complex"/>
    <property type="evidence" value="ECO:0007669"/>
    <property type="project" value="TreeGrafter"/>
</dbReference>
<dbReference type="GO" id="GO:0005886">
    <property type="term" value="C:plasma membrane"/>
    <property type="evidence" value="ECO:0007669"/>
    <property type="project" value="UniProtKB-SubCell"/>
</dbReference>
<dbReference type="GO" id="GO:0008137">
    <property type="term" value="F:NADH dehydrogenase (ubiquinone) activity"/>
    <property type="evidence" value="ECO:0007669"/>
    <property type="project" value="InterPro"/>
</dbReference>
<dbReference type="GO" id="GO:0050136">
    <property type="term" value="F:NADH:ubiquinone reductase (non-electrogenic) activity"/>
    <property type="evidence" value="ECO:0007669"/>
    <property type="project" value="UniProtKB-UniRule"/>
</dbReference>
<dbReference type="GO" id="GO:0048038">
    <property type="term" value="F:quinone binding"/>
    <property type="evidence" value="ECO:0007669"/>
    <property type="project" value="UniProtKB-KW"/>
</dbReference>
<dbReference type="FunFam" id="1.20.58.1610:FF:000003">
    <property type="entry name" value="NADH-quinone oxidoreductase subunit A"/>
    <property type="match status" value="1"/>
</dbReference>
<dbReference type="Gene3D" id="1.20.58.1610">
    <property type="entry name" value="NADH:ubiquinone/plastoquinone oxidoreductase, chain 3"/>
    <property type="match status" value="1"/>
</dbReference>
<dbReference type="HAMAP" id="MF_01394">
    <property type="entry name" value="NDH1_NuoA"/>
    <property type="match status" value="1"/>
</dbReference>
<dbReference type="InterPro" id="IPR023043">
    <property type="entry name" value="NAD(P)H_OxRDtase_bac/plastid"/>
</dbReference>
<dbReference type="InterPro" id="IPR000440">
    <property type="entry name" value="NADH_UbQ/plastoQ_OxRdtase_su3"/>
</dbReference>
<dbReference type="InterPro" id="IPR038430">
    <property type="entry name" value="NDAH_ubi_oxred_su3_sf"/>
</dbReference>
<dbReference type="PANTHER" id="PTHR11058:SF21">
    <property type="entry name" value="NADH-QUINONE OXIDOREDUCTASE SUBUNIT A"/>
    <property type="match status" value="1"/>
</dbReference>
<dbReference type="PANTHER" id="PTHR11058">
    <property type="entry name" value="NADH-UBIQUINONE OXIDOREDUCTASE CHAIN 3"/>
    <property type="match status" value="1"/>
</dbReference>
<dbReference type="Pfam" id="PF00507">
    <property type="entry name" value="Oxidored_q4"/>
    <property type="match status" value="1"/>
</dbReference>
<feature type="chain" id="PRO_0000362783" description="NADH-quinone oxidoreductase subunit A">
    <location>
        <begin position="1"/>
        <end position="145"/>
    </location>
</feature>
<feature type="transmembrane region" description="Helical" evidence="1">
    <location>
        <begin position="14"/>
        <end position="34"/>
    </location>
</feature>
<feature type="transmembrane region" description="Helical" evidence="1">
    <location>
        <begin position="66"/>
        <end position="86"/>
    </location>
</feature>
<feature type="transmembrane region" description="Helical" evidence="1">
    <location>
        <begin position="96"/>
        <end position="116"/>
    </location>
</feature>
<name>NUOA_SODGM</name>